<feature type="chain" id="PRO_0000050621" description="Galactonate operon transcriptional repressor">
    <location>
        <begin position="1"/>
        <end position="229"/>
    </location>
</feature>
<feature type="domain" description="HTH gntR-type" evidence="1">
    <location>
        <begin position="1"/>
        <end position="71"/>
    </location>
</feature>
<feature type="DNA-binding region" description="H-T-H motif" evidence="1">
    <location>
        <begin position="31"/>
        <end position="50"/>
    </location>
</feature>
<feature type="binding site" evidence="5 8">
    <location>
        <position position="146"/>
    </location>
    <ligand>
        <name>Zn(2+)</name>
        <dbReference type="ChEBI" id="CHEBI:29105"/>
    </ligand>
</feature>
<feature type="binding site" evidence="5 8">
    <location>
        <position position="150"/>
    </location>
    <ligand>
        <name>Zn(2+)</name>
        <dbReference type="ChEBI" id="CHEBI:29105"/>
    </ligand>
</feature>
<feature type="binding site" evidence="5 8">
    <location>
        <position position="195"/>
    </location>
    <ligand>
        <name>Zn(2+)</name>
        <dbReference type="ChEBI" id="CHEBI:29105"/>
    </ligand>
</feature>
<feature type="mutagenesis site" description="Loss of DNA-binding ability and repressor activity." evidence="3">
    <original>D</original>
    <variation>A</variation>
    <location>
        <position position="7"/>
    </location>
</feature>
<feature type="mutagenesis site" description="Loss of DNA-binding ability and repressor activity." evidence="3">
    <original>L</original>
    <variation>A</variation>
    <location>
        <position position="34"/>
    </location>
</feature>
<feature type="mutagenesis site" description="Loss of DNA-binding ability and repressor activity." evidence="3">
    <original>T</original>
    <variation>I</variation>
    <location>
        <position position="40"/>
    </location>
</feature>
<feature type="mutagenesis site" description="Loss of DNA-binding ability and repressor activity." evidence="3">
    <original>R</original>
    <variation>C</variation>
    <location>
        <position position="42"/>
    </location>
</feature>
<feature type="mutagenesis site" description="Loss of DNA-binding ability and repressor activity." evidence="3">
    <original>R</original>
    <variation>A</variation>
    <location>
        <position position="46"/>
    </location>
</feature>
<feature type="mutagenesis site" description="Loss of DNA-binding ability and repressor activity." evidence="3">
    <original>S</original>
    <variation>L</variation>
    <location>
        <position position="51"/>
    </location>
</feature>
<feature type="mutagenesis site" description="Shows a decreased binding to both DNA and D-galactonate." evidence="5">
    <original>R</original>
    <variation>A</variation>
    <location>
        <position position="102"/>
    </location>
</feature>
<feature type="mutagenesis site" description="Completely non-responsive to D-galactonate. Does not affect binding affinity for the dgo operator." evidence="4">
    <original>R</original>
    <variation>Q</variation>
    <location>
        <position position="102"/>
    </location>
</feature>
<feature type="mutagenesis site" description="Completely non-responsive to D-galactonate. Does not affect binding affinity for the dgo operator." evidence="4">
    <original>E</original>
    <variation>K</variation>
    <location>
        <position position="106"/>
    </location>
</feature>
<feature type="mutagenesis site" description="Shows increased DNA binding but can be slightly reverted in the presence of D-galactonate. Strong decrease in binding to D-galactonate." evidence="5">
    <original>D</original>
    <variation>A</variation>
    <location>
        <position position="146"/>
    </location>
</feature>
<feature type="mutagenesis site" description="Completely non-responsive to D-galactonate. Shows a slight loss of repression ability." evidence="4">
    <original>D</original>
    <variation>N</variation>
    <location>
        <position position="146"/>
    </location>
</feature>
<feature type="mutagenesis site" description="Shows a decreased binding to both DNA and D-galactonate." evidence="5">
    <original>H</original>
    <variation>A</variation>
    <location>
        <position position="150"/>
    </location>
</feature>
<feature type="mutagenesis site" description="Completely non-responsive to D-galactonate." evidence="4">
    <original>H</original>
    <variation>Y</variation>
    <location>
        <position position="150"/>
    </location>
</feature>
<feature type="mutagenesis site" description="Shows a decreased binding to both DNA and D-galactonate." evidence="5">
    <original>Q</original>
    <variation>A</variation>
    <location>
        <position position="173"/>
    </location>
</feature>
<feature type="mutagenesis site" description="Shows no significant effect on the binding to DNA and D-galactonate." evidence="5">
    <original>R</original>
    <variation>A</variation>
    <location>
        <position position="179"/>
    </location>
</feature>
<feature type="mutagenesis site" description="Shows no significant effect on the binding to DNA and D-galactonate." evidence="5">
    <original>W</original>
    <variation>A</variation>
    <location>
        <position position="181"/>
    </location>
</feature>
<feature type="mutagenesis site" description="Shows a decreased binding to both DNA and D-galactonate." evidence="5">
    <original>D</original>
    <variation>A</variation>
    <location>
        <position position="184"/>
    </location>
</feature>
<feature type="mutagenesis site" description="Shows a decreased binding to both DNA and D-galactonate." evidence="5">
    <original>T</original>
    <variation>A</variation>
    <location>
        <position position="191"/>
    </location>
</feature>
<feature type="mutagenesis site" description="Completely non-responsive to D-galactonate. Does not affect binding affinity for the dgo operator." evidence="4">
    <original>T</original>
    <variation>M</variation>
    <location>
        <position position="191"/>
    </location>
</feature>
<feature type="mutagenesis site" description="Completely non-responsive to D-galactonate. Does not affect binding affinity for the dgo operator." evidence="4">
    <original>L</original>
    <variation>F</variation>
    <location>
        <position position="192"/>
    </location>
</feature>
<feature type="mutagenesis site" description="Shows a decreased binding to both DNA and D-galactonate." evidence="5">
    <original>H</original>
    <variation>A</variation>
    <location>
        <position position="195"/>
    </location>
</feature>
<feature type="mutagenesis site" description="Completely non-responsive to D-galactonate." evidence="4">
    <original>H</original>
    <variation>Y</variation>
    <location>
        <position position="195"/>
    </location>
</feature>
<feature type="mutagenesis site" description="Shows increased DNA binding but can be slightly reverted in the presence of D-galactonate." evidence="5">
    <original>S</original>
    <variation>A</variation>
    <location>
        <position position="221"/>
    </location>
</feature>
<feature type="mutagenesis site" description="Decreases sensitivity to D-galactonate. Does not affect binding affinity for the dgo operator." evidence="4">
    <original>S</original>
    <variation>L</variation>
    <location>
        <position position="221"/>
    </location>
</feature>
<feature type="mutagenesis site" description="Shows a decreased binding to both DNA and D-galactonate." evidence="5">
    <original>R</original>
    <variation>A</variation>
    <variation>E</variation>
    <location>
        <position position="224"/>
    </location>
</feature>
<feature type="sequence conflict" description="In Ref. 1; AAA62046." evidence="7" ref="1">
    <original>RW</original>
    <variation>VA</variation>
    <location>
        <begin position="111"/>
        <end position="112"/>
    </location>
</feature>
<reference key="1">
    <citation type="journal article" date="1993" name="Genomics">
        <title>DNA sequence and analysis of 136 kilobases of the Escherichia coli genome: organizational symmetry around the origin of replication.</title>
        <authorList>
            <person name="Burland V.D."/>
            <person name="Plunkett G. III"/>
            <person name="Daniels D.L."/>
            <person name="Blattner F.R."/>
        </authorList>
    </citation>
    <scope>NUCLEOTIDE SEQUENCE [LARGE SCALE GENOMIC DNA]</scope>
    <source>
        <strain>K12 / MG1655 / ATCC 47076</strain>
    </source>
</reference>
<reference key="2">
    <citation type="journal article" date="1997" name="Science">
        <title>The complete genome sequence of Escherichia coli K-12.</title>
        <authorList>
            <person name="Blattner F.R."/>
            <person name="Plunkett G. III"/>
            <person name="Bloch C.A."/>
            <person name="Perna N.T."/>
            <person name="Burland V."/>
            <person name="Riley M."/>
            <person name="Collado-Vides J."/>
            <person name="Glasner J.D."/>
            <person name="Rode C.K."/>
            <person name="Mayhew G.F."/>
            <person name="Gregor J."/>
            <person name="Davis N.W."/>
            <person name="Kirkpatrick H.A."/>
            <person name="Goeden M.A."/>
            <person name="Rose D.J."/>
            <person name="Mau B."/>
            <person name="Shao Y."/>
        </authorList>
    </citation>
    <scope>NUCLEOTIDE SEQUENCE [LARGE SCALE GENOMIC DNA]</scope>
    <source>
        <strain>K12 / MG1655 / ATCC 47076</strain>
    </source>
</reference>
<reference key="3">
    <citation type="journal article" date="2006" name="Nucleic Acids Res.">
        <title>Escherichia coli K-12: a cooperatively developed annotation snapshot -- 2005.</title>
        <authorList>
            <person name="Riley M."/>
            <person name="Abe T."/>
            <person name="Arnaud M.B."/>
            <person name="Berlyn M.K.B."/>
            <person name="Blattner F.R."/>
            <person name="Chaudhuri R.R."/>
            <person name="Glasner J.D."/>
            <person name="Horiuchi T."/>
            <person name="Keseler I.M."/>
            <person name="Kosuge T."/>
            <person name="Mori H."/>
            <person name="Perna N.T."/>
            <person name="Plunkett G. III"/>
            <person name="Rudd K.E."/>
            <person name="Serres M.H."/>
            <person name="Thomas G.H."/>
            <person name="Thomson N.R."/>
            <person name="Wishart D."/>
            <person name="Wanner B.L."/>
        </authorList>
    </citation>
    <scope>SEQUENCE REVISION</scope>
</reference>
<reference key="4">
    <citation type="journal article" date="2006" name="Mol. Syst. Biol.">
        <title>Highly accurate genome sequences of Escherichia coli K-12 strains MG1655 and W3110.</title>
        <authorList>
            <person name="Hayashi K."/>
            <person name="Morooka N."/>
            <person name="Yamamoto Y."/>
            <person name="Fujita K."/>
            <person name="Isono K."/>
            <person name="Choi S."/>
            <person name="Ohtsubo E."/>
            <person name="Baba T."/>
            <person name="Wanner B.L."/>
            <person name="Mori H."/>
            <person name="Horiuchi T."/>
        </authorList>
    </citation>
    <scope>NUCLEOTIDE SEQUENCE [LARGE SCALE GENOMIC DNA]</scope>
    <source>
        <strain>K12 / W3110 / ATCC 27325 / DSM 5911</strain>
    </source>
</reference>
<reference key="5">
    <citation type="journal article" date="1978" name="Arch. Microbiol.">
        <title>The utilisation of D-galactonate and D-2-oxo-3-deoxygalactonate by Escherichia coli K-12. Biochemical and genetical studies.</title>
        <authorList>
            <person name="Cooper R.A."/>
        </authorList>
    </citation>
    <scope>FUNCTION</scope>
    <scope>OPERON</scope>
    <source>
        <strain>K12</strain>
    </source>
</reference>
<reference key="6">
    <citation type="journal article" date="2019" name="J. Bacteriol.">
        <title>Molecular and functional insights into the regulation of D-galactonate metabolism by the transcriptional regulator DgoR in Escherichia coli.</title>
        <authorList>
            <person name="Singh B."/>
            <person name="Arya G."/>
            <person name="Kundu N."/>
            <person name="Sangwan A."/>
            <person name="Nongthombam S."/>
            <person name="Chaba R."/>
        </authorList>
    </citation>
    <scope>FUNCTION</scope>
    <scope>DNA-BINDING</scope>
    <scope>ACTIVITY REGULATION</scope>
    <scope>INDUCTION</scope>
    <scope>OPERON</scope>
    <scope>DISRUPTION PHENOTYPE</scope>
    <scope>MUTAGENESIS OF ASP-7; LEU-34; THR-40; ARG-42; ARG-46 AND SER-51</scope>
</reference>
<reference key="7">
    <citation type="journal article" date="2021" name="Mol. Microbiol.">
        <title>Molecular insights into effector binding by DgoR, a GntR/FadR family transcriptional repressor of D-galactonate metabolism in Escherichia coli.</title>
        <authorList>
            <person name="Arya G."/>
            <person name="Pal M."/>
            <person name="Sharma M."/>
            <person name="Singh B."/>
            <person name="Singh S."/>
            <person name="Agrawal V."/>
            <person name="Chaba R."/>
        </authorList>
    </citation>
    <scope>FUNCTION</scope>
    <scope>ACTIVITY REGULATION</scope>
    <scope>SUBUNIT</scope>
    <scope>DOMAIN</scope>
    <scope>MUTAGENESIS OF ARG-102; GLU-106; ASP-146; HIS-150; THR-191; LEU-192; HIS-195 AND SER-221</scope>
</reference>
<reference evidence="8" key="8">
    <citation type="journal article" date="2020" name="Front. Microbiol.">
        <title>Structural and functional analyses of the transcription repressor DgoR from Escherichia coli reveal a divalent metal-containing D-galactonate binding pocket.</title>
        <authorList>
            <person name="Lin Z."/>
            <person name="Sun Y."/>
            <person name="Liu Y."/>
            <person name="Tong S."/>
            <person name="Shang Z."/>
            <person name="Cai Y."/>
            <person name="Lin W."/>
        </authorList>
    </citation>
    <scope>X-RAY CRYSTALLOGRAPHY (2.05 ANGSTROMS) IN COMPLEX WITH ZINC</scope>
    <scope>FUNCTION</scope>
    <scope>ACTIVITY REGULATION</scope>
    <scope>DOMAIN</scope>
    <scope>MUTAGENESIS OF ARG-102; ASP-146; HIS-150; GLN-173; ARG-179; TRP-181; ASP-184; THR-191; HIS-195; SER-221 AND ARG-224</scope>
</reference>
<comment type="function">
    <text evidence="2 3 4 5">Involved in the regulation of D-galactonate metabolism (PubMed:211976, PubMed:30455279). Represses the expression of the dgoRKADT operon by binding to two closely spaced inverted repeats in the cis-acting element, which overlap with the D-galactonate responsive dgo promoter (PubMed:30455279). Employs a derepression mechanism using D-galactonate as a specific effector molecule (PubMed:30455279, PubMed:33068046, PubMed:33224125).</text>
</comment>
<comment type="activity regulation">
    <text evidence="3 4 5">D-galactonate binds DgoR and induces a conformational change in the protein, which decreases its affinity for DNA and consequently derepresses transcription of the dgoRKADT operon.</text>
</comment>
<comment type="subunit">
    <text evidence="4">Homodimer.</text>
</comment>
<comment type="induction">
    <text evidence="2 3">Part of the dgoRKADT operon, which encodes proteins for the metabolism of D-galactonate (PubMed:211976, PubMed:30455279). Negatively autoregulated (PubMed:30455279).</text>
</comment>
<comment type="domain">
    <text evidence="4 5">Contains an N-terminal DNA binding region and a C-terminal effector-binding cavity (PubMed:33068046, PubMed:33224125). The C-terminal region also contains a metal binding site (PubMed:33224125). The divalent metal ion is not directly involved in the interaction with DNA, but it plays an important role in interaction with D-galactonate (PubMed:33224125).</text>
</comment>
<comment type="disruption phenotype">
    <text evidence="3">Deletion of the gene leads to faster growth of E.coli in D-galactonate and results in a considerable increase in the expression of dgo genes.</text>
</comment>
<comment type="sequence caution" evidence="7">
    <conflict type="frameshift">
        <sequence resource="EMBL-CDS" id="AAA62046"/>
    </conflict>
</comment>
<proteinExistence type="evidence at protein level"/>
<sequence length="229" mass="26080">MTLNKTDRIVITLGKQIVHGKYVPGSPLPAEAELCEEFATSRNIIREVFRSLMAKRLIEMKRYRGAFVAPRNQWNYLDTDVLQWVLENDYDPRLISAMSEVRNLVEPAIARWAAERATSSDLAQIESALNEMIANNQDREAFNEADIRYHEAVLQSVHNPVLQQLSIAISSLQRAVFERTWMGDEANMPQTLQEHKALFDAIRHQDGDAAEQAALTMIASSTRRLKEIT</sequence>
<organism>
    <name type="scientific">Escherichia coli (strain K12)</name>
    <dbReference type="NCBI Taxonomy" id="83333"/>
    <lineage>
        <taxon>Bacteria</taxon>
        <taxon>Pseudomonadati</taxon>
        <taxon>Pseudomonadota</taxon>
        <taxon>Gammaproteobacteria</taxon>
        <taxon>Enterobacterales</taxon>
        <taxon>Enterobacteriaceae</taxon>
        <taxon>Escherichia</taxon>
    </lineage>
</organism>
<gene>
    <name evidence="6" type="primary">dgoR</name>
    <name type="synonym">yidW</name>
    <name type="ordered locus">b4479</name>
    <name type="ordered locus">JW5627</name>
</gene>
<name>DGOR_ECOLI</name>
<keyword id="KW-0002">3D-structure</keyword>
<keyword id="KW-0238">DNA-binding</keyword>
<keyword id="KW-0479">Metal-binding</keyword>
<keyword id="KW-1185">Reference proteome</keyword>
<keyword id="KW-0678">Repressor</keyword>
<keyword id="KW-0804">Transcription</keyword>
<keyword id="KW-0805">Transcription regulation</keyword>
<keyword id="KW-0862">Zinc</keyword>
<dbReference type="EMBL" id="L10328">
    <property type="protein sequence ID" value="AAA62046.1"/>
    <property type="status" value="ALT_FRAME"/>
    <property type="molecule type" value="Genomic_DNA"/>
</dbReference>
<dbReference type="EMBL" id="U00096">
    <property type="protein sequence ID" value="AAT48199.1"/>
    <property type="molecule type" value="Genomic_DNA"/>
</dbReference>
<dbReference type="EMBL" id="AP009048">
    <property type="protein sequence ID" value="BAE77599.1"/>
    <property type="molecule type" value="Genomic_DNA"/>
</dbReference>
<dbReference type="RefSeq" id="WP_000174305.1">
    <property type="nucleotide sequence ID" value="NZ_STEB01000015.1"/>
</dbReference>
<dbReference type="RefSeq" id="YP_026239.1">
    <property type="nucleotide sequence ID" value="NC_000913.3"/>
</dbReference>
<dbReference type="PDB" id="7C7E">
    <property type="method" value="X-ray"/>
    <property type="resolution" value="2.05 A"/>
    <property type="chains" value="A=1-229"/>
</dbReference>
<dbReference type="PDBsum" id="7C7E"/>
<dbReference type="SMR" id="P31460"/>
<dbReference type="BioGRID" id="4263373">
    <property type="interactions" value="115"/>
</dbReference>
<dbReference type="BioGRID" id="853514">
    <property type="interactions" value="1"/>
</dbReference>
<dbReference type="DIP" id="DIP-9435N"/>
<dbReference type="FunCoup" id="P31460">
    <property type="interactions" value="315"/>
</dbReference>
<dbReference type="STRING" id="511145.b4479"/>
<dbReference type="jPOST" id="P31460"/>
<dbReference type="PaxDb" id="511145-b4479"/>
<dbReference type="EnsemblBacteria" id="AAT48199">
    <property type="protein sequence ID" value="AAT48199"/>
    <property type="gene ID" value="b4479"/>
</dbReference>
<dbReference type="GeneID" id="2847767"/>
<dbReference type="GeneID" id="93778436"/>
<dbReference type="KEGG" id="ecj:JW5627"/>
<dbReference type="KEGG" id="eco:b4479"/>
<dbReference type="KEGG" id="ecoc:C3026_20030"/>
<dbReference type="PATRIC" id="fig|1411691.4.peg.3008"/>
<dbReference type="EchoBASE" id="EB1669"/>
<dbReference type="eggNOG" id="COG2186">
    <property type="taxonomic scope" value="Bacteria"/>
</dbReference>
<dbReference type="HOGENOM" id="CLU_017584_9_4_6"/>
<dbReference type="InParanoid" id="P31460"/>
<dbReference type="OMA" id="CEWNVYD"/>
<dbReference type="OrthoDB" id="9028214at2"/>
<dbReference type="PhylomeDB" id="P31460"/>
<dbReference type="BioCyc" id="EcoCyc:G7790-MONOMER"/>
<dbReference type="PRO" id="PR:P31460"/>
<dbReference type="Proteomes" id="UP000000625">
    <property type="component" value="Chromosome"/>
</dbReference>
<dbReference type="GO" id="GO:0000987">
    <property type="term" value="F:cis-regulatory region sequence-specific DNA binding"/>
    <property type="evidence" value="ECO:0000314"/>
    <property type="project" value="EcoCyc"/>
</dbReference>
<dbReference type="GO" id="GO:0003677">
    <property type="term" value="F:DNA binding"/>
    <property type="evidence" value="ECO:0000314"/>
    <property type="project" value="EcoCyc"/>
</dbReference>
<dbReference type="GO" id="GO:0001217">
    <property type="term" value="F:DNA-binding transcription repressor activity"/>
    <property type="evidence" value="ECO:0000315"/>
    <property type="project" value="EcoCyc"/>
</dbReference>
<dbReference type="GO" id="GO:0042802">
    <property type="term" value="F:identical protein binding"/>
    <property type="evidence" value="ECO:0000314"/>
    <property type="project" value="EcoCyc"/>
</dbReference>
<dbReference type="GO" id="GO:0098531">
    <property type="term" value="F:ligand-modulated transcription factor activity"/>
    <property type="evidence" value="ECO:0000314"/>
    <property type="project" value="EcoCyc"/>
</dbReference>
<dbReference type="GO" id="GO:0046872">
    <property type="term" value="F:metal ion binding"/>
    <property type="evidence" value="ECO:0007669"/>
    <property type="project" value="UniProtKB-KW"/>
</dbReference>
<dbReference type="GO" id="GO:0000976">
    <property type="term" value="F:transcription cis-regulatory region binding"/>
    <property type="evidence" value="ECO:0000314"/>
    <property type="project" value="EcoCyc"/>
</dbReference>
<dbReference type="GO" id="GO:2000143">
    <property type="term" value="P:negative regulation of DNA-templated transcription initiation"/>
    <property type="evidence" value="ECO:0000315"/>
    <property type="project" value="EcoCyc"/>
</dbReference>
<dbReference type="CDD" id="cd07377">
    <property type="entry name" value="WHTH_GntR"/>
    <property type="match status" value="1"/>
</dbReference>
<dbReference type="FunFam" id="1.10.10.10:FF:000152">
    <property type="entry name" value="FadR family transcriptional regulator"/>
    <property type="match status" value="1"/>
</dbReference>
<dbReference type="FunFam" id="1.20.120.530:FF:000004">
    <property type="entry name" value="Galactonate operon transcriptional repressor"/>
    <property type="match status" value="1"/>
</dbReference>
<dbReference type="Gene3D" id="1.20.120.530">
    <property type="entry name" value="GntR ligand-binding domain-like"/>
    <property type="match status" value="1"/>
</dbReference>
<dbReference type="Gene3D" id="1.10.10.10">
    <property type="entry name" value="Winged helix-like DNA-binding domain superfamily/Winged helix DNA-binding domain"/>
    <property type="match status" value="1"/>
</dbReference>
<dbReference type="InterPro" id="IPR011711">
    <property type="entry name" value="GntR_C"/>
</dbReference>
<dbReference type="InterPro" id="IPR008920">
    <property type="entry name" value="TF_FadR/GntR_C"/>
</dbReference>
<dbReference type="InterPro" id="IPR000524">
    <property type="entry name" value="Tscrpt_reg_HTH_GntR"/>
</dbReference>
<dbReference type="InterPro" id="IPR036388">
    <property type="entry name" value="WH-like_DNA-bd_sf"/>
</dbReference>
<dbReference type="InterPro" id="IPR036390">
    <property type="entry name" value="WH_DNA-bd_sf"/>
</dbReference>
<dbReference type="PANTHER" id="PTHR43537:SF21">
    <property type="entry name" value="GALACTONATE OPERON TRANSCRIPTIONAL REPRESSOR"/>
    <property type="match status" value="1"/>
</dbReference>
<dbReference type="PANTHER" id="PTHR43537">
    <property type="entry name" value="TRANSCRIPTIONAL REGULATOR, GNTR FAMILY"/>
    <property type="match status" value="1"/>
</dbReference>
<dbReference type="Pfam" id="PF07729">
    <property type="entry name" value="FCD"/>
    <property type="match status" value="1"/>
</dbReference>
<dbReference type="Pfam" id="PF00392">
    <property type="entry name" value="GntR"/>
    <property type="match status" value="1"/>
</dbReference>
<dbReference type="PRINTS" id="PR00035">
    <property type="entry name" value="HTHGNTR"/>
</dbReference>
<dbReference type="SMART" id="SM00895">
    <property type="entry name" value="FCD"/>
    <property type="match status" value="1"/>
</dbReference>
<dbReference type="SMART" id="SM00345">
    <property type="entry name" value="HTH_GNTR"/>
    <property type="match status" value="1"/>
</dbReference>
<dbReference type="SUPFAM" id="SSF48008">
    <property type="entry name" value="GntR ligand-binding domain-like"/>
    <property type="match status" value="1"/>
</dbReference>
<dbReference type="SUPFAM" id="SSF46785">
    <property type="entry name" value="Winged helix' DNA-binding domain"/>
    <property type="match status" value="1"/>
</dbReference>
<dbReference type="PROSITE" id="PS50949">
    <property type="entry name" value="HTH_GNTR"/>
    <property type="match status" value="1"/>
</dbReference>
<protein>
    <recommendedName>
        <fullName evidence="7">Galactonate operon transcriptional repressor</fullName>
    </recommendedName>
    <alternativeName>
        <fullName evidence="7">HTH-type transcriptional repressor DgoR</fullName>
    </alternativeName>
</protein>
<accession>P31460</accession>
<accession>O32529</accession>
<accession>P76735</accession>
<accession>Q2M807</accession>
<accession>Q6BF15</accession>
<evidence type="ECO:0000255" key="1">
    <source>
        <dbReference type="PROSITE-ProRule" id="PRU00307"/>
    </source>
</evidence>
<evidence type="ECO:0000269" key="2">
    <source>
    </source>
</evidence>
<evidence type="ECO:0000269" key="3">
    <source>
    </source>
</evidence>
<evidence type="ECO:0000269" key="4">
    <source>
    </source>
</evidence>
<evidence type="ECO:0000269" key="5">
    <source>
    </source>
</evidence>
<evidence type="ECO:0000303" key="6">
    <source>
    </source>
</evidence>
<evidence type="ECO:0000305" key="7"/>
<evidence type="ECO:0007744" key="8">
    <source>
        <dbReference type="PDB" id="7C7E"/>
    </source>
</evidence>